<feature type="chain" id="PRO_0000112319" description="Carbamoyl phosphate synthase small chain">
    <location>
        <begin position="1"/>
        <end position="366"/>
    </location>
</feature>
<feature type="domain" description="Glutamine amidotransferase type-1" evidence="1">
    <location>
        <begin position="173"/>
        <end position="360"/>
    </location>
</feature>
<feature type="region of interest" description="CPSase" evidence="1">
    <location>
        <begin position="1"/>
        <end position="171"/>
    </location>
</feature>
<feature type="active site" description="Nucleophile" evidence="1">
    <location>
        <position position="248"/>
    </location>
</feature>
<feature type="active site" evidence="1">
    <location>
        <position position="333"/>
    </location>
</feature>
<feature type="active site" evidence="1">
    <location>
        <position position="335"/>
    </location>
</feature>
<feature type="binding site" evidence="1">
    <location>
        <position position="47"/>
    </location>
    <ligand>
        <name>L-glutamine</name>
        <dbReference type="ChEBI" id="CHEBI:58359"/>
    </ligand>
</feature>
<feature type="binding site" evidence="1">
    <location>
        <position position="221"/>
    </location>
    <ligand>
        <name>L-glutamine</name>
        <dbReference type="ChEBI" id="CHEBI:58359"/>
    </ligand>
</feature>
<feature type="binding site" evidence="1">
    <location>
        <position position="223"/>
    </location>
    <ligand>
        <name>L-glutamine</name>
        <dbReference type="ChEBI" id="CHEBI:58359"/>
    </ligand>
</feature>
<feature type="binding site" evidence="1">
    <location>
        <position position="249"/>
    </location>
    <ligand>
        <name>L-glutamine</name>
        <dbReference type="ChEBI" id="CHEBI:58359"/>
    </ligand>
</feature>
<feature type="binding site" evidence="1">
    <location>
        <position position="252"/>
    </location>
    <ligand>
        <name>L-glutamine</name>
        <dbReference type="ChEBI" id="CHEBI:58359"/>
    </ligand>
</feature>
<feature type="binding site" evidence="1">
    <location>
        <position position="290"/>
    </location>
    <ligand>
        <name>L-glutamine</name>
        <dbReference type="ChEBI" id="CHEBI:58359"/>
    </ligand>
</feature>
<feature type="binding site" evidence="1">
    <location>
        <position position="292"/>
    </location>
    <ligand>
        <name>L-glutamine</name>
        <dbReference type="ChEBI" id="CHEBI:58359"/>
    </ligand>
</feature>
<feature type="binding site" evidence="1">
    <location>
        <position position="293"/>
    </location>
    <ligand>
        <name>L-glutamine</name>
        <dbReference type="ChEBI" id="CHEBI:58359"/>
    </ligand>
</feature>
<proteinExistence type="inferred from homology"/>
<gene>
    <name evidence="1" type="primary">carA</name>
    <name type="synonym">pyrAA</name>
    <name type="ordered locus">SAS1136</name>
</gene>
<comment type="function">
    <text evidence="1">Small subunit of the glutamine-dependent carbamoyl phosphate synthetase (CPSase). CPSase catalyzes the formation of carbamoyl phosphate from the ammonia moiety of glutamine, carbonate, and phosphate donated by ATP, constituting the first step of 2 biosynthetic pathways, one leading to arginine and/or urea and the other to pyrimidine nucleotides. The small subunit (glutamine amidotransferase) binds and cleaves glutamine to supply the large subunit with the substrate ammonia.</text>
</comment>
<comment type="catalytic activity">
    <reaction evidence="1">
        <text>hydrogencarbonate + L-glutamine + 2 ATP + H2O = carbamoyl phosphate + L-glutamate + 2 ADP + phosphate + 2 H(+)</text>
        <dbReference type="Rhea" id="RHEA:18633"/>
        <dbReference type="ChEBI" id="CHEBI:15377"/>
        <dbReference type="ChEBI" id="CHEBI:15378"/>
        <dbReference type="ChEBI" id="CHEBI:17544"/>
        <dbReference type="ChEBI" id="CHEBI:29985"/>
        <dbReference type="ChEBI" id="CHEBI:30616"/>
        <dbReference type="ChEBI" id="CHEBI:43474"/>
        <dbReference type="ChEBI" id="CHEBI:58228"/>
        <dbReference type="ChEBI" id="CHEBI:58359"/>
        <dbReference type="ChEBI" id="CHEBI:456216"/>
        <dbReference type="EC" id="6.3.5.5"/>
    </reaction>
</comment>
<comment type="catalytic activity">
    <molecule>Carbamoyl phosphate synthase small chain</molecule>
    <reaction evidence="1">
        <text>L-glutamine + H2O = L-glutamate + NH4(+)</text>
        <dbReference type="Rhea" id="RHEA:15889"/>
        <dbReference type="ChEBI" id="CHEBI:15377"/>
        <dbReference type="ChEBI" id="CHEBI:28938"/>
        <dbReference type="ChEBI" id="CHEBI:29985"/>
        <dbReference type="ChEBI" id="CHEBI:58359"/>
    </reaction>
</comment>
<comment type="pathway">
    <text evidence="1">Amino-acid biosynthesis; L-arginine biosynthesis; carbamoyl phosphate from bicarbonate: step 1/1.</text>
</comment>
<comment type="pathway">
    <text evidence="1">Pyrimidine metabolism; UMP biosynthesis via de novo pathway; (S)-dihydroorotate from bicarbonate: step 1/3.</text>
</comment>
<comment type="subunit">
    <text evidence="1">Composed of two chains; the small (or glutamine) chain promotes the hydrolysis of glutamine to ammonia, which is used by the large (or ammonia) chain to synthesize carbamoyl phosphate. Tetramer of heterodimers (alpha,beta)4.</text>
</comment>
<comment type="similarity">
    <text evidence="1">Belongs to the CarA family.</text>
</comment>
<name>CARA_STAAS</name>
<protein>
    <recommendedName>
        <fullName evidence="1">Carbamoyl phosphate synthase small chain</fullName>
        <ecNumber evidence="1">6.3.5.5</ecNumber>
    </recommendedName>
    <alternativeName>
        <fullName evidence="1">Carbamoyl phosphate synthetase glutamine chain</fullName>
    </alternativeName>
</protein>
<organism>
    <name type="scientific">Staphylococcus aureus (strain MSSA476)</name>
    <dbReference type="NCBI Taxonomy" id="282459"/>
    <lineage>
        <taxon>Bacteria</taxon>
        <taxon>Bacillati</taxon>
        <taxon>Bacillota</taxon>
        <taxon>Bacilli</taxon>
        <taxon>Bacillales</taxon>
        <taxon>Staphylococcaceae</taxon>
        <taxon>Staphylococcus</taxon>
    </lineage>
</organism>
<dbReference type="EC" id="6.3.5.5" evidence="1"/>
<dbReference type="EMBL" id="BX571857">
    <property type="protein sequence ID" value="CAG42913.1"/>
    <property type="molecule type" value="Genomic_DNA"/>
</dbReference>
<dbReference type="RefSeq" id="WP_001190913.1">
    <property type="nucleotide sequence ID" value="NC_002953.3"/>
</dbReference>
<dbReference type="SMR" id="Q6GA11"/>
<dbReference type="KEGG" id="sas:SAS1136"/>
<dbReference type="HOGENOM" id="CLU_035901_2_1_9"/>
<dbReference type="UniPathway" id="UPA00068">
    <property type="reaction ID" value="UER00171"/>
</dbReference>
<dbReference type="UniPathway" id="UPA00070">
    <property type="reaction ID" value="UER00115"/>
</dbReference>
<dbReference type="GO" id="GO:0005524">
    <property type="term" value="F:ATP binding"/>
    <property type="evidence" value="ECO:0007669"/>
    <property type="project" value="UniProtKB-UniRule"/>
</dbReference>
<dbReference type="GO" id="GO:0004088">
    <property type="term" value="F:carbamoyl-phosphate synthase (glutamine-hydrolyzing) activity"/>
    <property type="evidence" value="ECO:0007669"/>
    <property type="project" value="UniProtKB-UniRule"/>
</dbReference>
<dbReference type="GO" id="GO:0004359">
    <property type="term" value="F:glutaminase activity"/>
    <property type="evidence" value="ECO:0007669"/>
    <property type="project" value="RHEA"/>
</dbReference>
<dbReference type="GO" id="GO:0006207">
    <property type="term" value="P:'de novo' pyrimidine nucleobase biosynthetic process"/>
    <property type="evidence" value="ECO:0007669"/>
    <property type="project" value="InterPro"/>
</dbReference>
<dbReference type="GO" id="GO:0044205">
    <property type="term" value="P:'de novo' UMP biosynthetic process"/>
    <property type="evidence" value="ECO:0007669"/>
    <property type="project" value="UniProtKB-UniRule"/>
</dbReference>
<dbReference type="GO" id="GO:0006541">
    <property type="term" value="P:glutamine metabolic process"/>
    <property type="evidence" value="ECO:0007669"/>
    <property type="project" value="InterPro"/>
</dbReference>
<dbReference type="GO" id="GO:0006526">
    <property type="term" value="P:L-arginine biosynthetic process"/>
    <property type="evidence" value="ECO:0007669"/>
    <property type="project" value="UniProtKB-UniRule"/>
</dbReference>
<dbReference type="CDD" id="cd01744">
    <property type="entry name" value="GATase1_CPSase"/>
    <property type="match status" value="1"/>
</dbReference>
<dbReference type="FunFam" id="3.40.50.880:FF:000029">
    <property type="entry name" value="Carbamoyl-phosphate synthase small chain"/>
    <property type="match status" value="1"/>
</dbReference>
<dbReference type="FunFam" id="3.50.30.20:FF:000001">
    <property type="entry name" value="Carbamoyl-phosphate synthase small chain"/>
    <property type="match status" value="1"/>
</dbReference>
<dbReference type="Gene3D" id="3.40.50.880">
    <property type="match status" value="1"/>
</dbReference>
<dbReference type="Gene3D" id="3.50.30.20">
    <property type="entry name" value="Carbamoyl-phosphate synthase small subunit, N-terminal domain"/>
    <property type="match status" value="1"/>
</dbReference>
<dbReference type="HAMAP" id="MF_01209">
    <property type="entry name" value="CPSase_S_chain"/>
    <property type="match status" value="1"/>
</dbReference>
<dbReference type="InterPro" id="IPR050472">
    <property type="entry name" value="Anth_synth/Amidotransfase"/>
</dbReference>
<dbReference type="InterPro" id="IPR006274">
    <property type="entry name" value="CarbamoylP_synth_ssu"/>
</dbReference>
<dbReference type="InterPro" id="IPR002474">
    <property type="entry name" value="CarbamoylP_synth_ssu_N"/>
</dbReference>
<dbReference type="InterPro" id="IPR036480">
    <property type="entry name" value="CarbP_synth_ssu_N_sf"/>
</dbReference>
<dbReference type="InterPro" id="IPR029062">
    <property type="entry name" value="Class_I_gatase-like"/>
</dbReference>
<dbReference type="InterPro" id="IPR035686">
    <property type="entry name" value="CPSase_GATase1"/>
</dbReference>
<dbReference type="InterPro" id="IPR017926">
    <property type="entry name" value="GATASE"/>
</dbReference>
<dbReference type="NCBIfam" id="TIGR01368">
    <property type="entry name" value="CPSaseIIsmall"/>
    <property type="match status" value="1"/>
</dbReference>
<dbReference type="NCBIfam" id="NF009475">
    <property type="entry name" value="PRK12838.1"/>
    <property type="match status" value="1"/>
</dbReference>
<dbReference type="PANTHER" id="PTHR43418:SF7">
    <property type="entry name" value="CARBAMOYL-PHOSPHATE SYNTHASE SMALL CHAIN"/>
    <property type="match status" value="1"/>
</dbReference>
<dbReference type="PANTHER" id="PTHR43418">
    <property type="entry name" value="MULTIFUNCTIONAL TRYPTOPHAN BIOSYNTHESIS PROTEIN-RELATED"/>
    <property type="match status" value="1"/>
</dbReference>
<dbReference type="Pfam" id="PF00988">
    <property type="entry name" value="CPSase_sm_chain"/>
    <property type="match status" value="1"/>
</dbReference>
<dbReference type="Pfam" id="PF00117">
    <property type="entry name" value="GATase"/>
    <property type="match status" value="1"/>
</dbReference>
<dbReference type="PRINTS" id="PR00097">
    <property type="entry name" value="ANTSNTHASEII"/>
</dbReference>
<dbReference type="PRINTS" id="PR00099">
    <property type="entry name" value="CPSGATASE"/>
</dbReference>
<dbReference type="PRINTS" id="PR00096">
    <property type="entry name" value="GATASE"/>
</dbReference>
<dbReference type="SMART" id="SM01097">
    <property type="entry name" value="CPSase_sm_chain"/>
    <property type="match status" value="1"/>
</dbReference>
<dbReference type="SUPFAM" id="SSF52021">
    <property type="entry name" value="Carbamoyl phosphate synthetase, small subunit N-terminal domain"/>
    <property type="match status" value="1"/>
</dbReference>
<dbReference type="SUPFAM" id="SSF52317">
    <property type="entry name" value="Class I glutamine amidotransferase-like"/>
    <property type="match status" value="1"/>
</dbReference>
<dbReference type="PROSITE" id="PS51273">
    <property type="entry name" value="GATASE_TYPE_1"/>
    <property type="match status" value="1"/>
</dbReference>
<sequence>MQSKRYLVLEDGSFYEGYRLGSDNLTVGEIVFNTAMTGYQETISDPSYTGQIITFTYPLIGNYGINRDDFESLVPTLNGIVVKEASAHPSNFRQQKTLHDVLELHQIPGIAGVDTRSITRKIRQHGVLKAGFTDRKEDIDQLVKHLQQVELPKNEVEIVSTKTPYVSTGKDLSVVLVDFGKKQNIVRELNVRGCNVTVVPYTTTAEEILAMAPDGVMLSNGPGNPEVVECAIPMIQGILGKIPFFGICLGHQLFALSQGASSFKMKFGHRGANHPVKNLETGKVDITSQNHGYAIDIDSLKSTDLEVTHLALNDGTVEGLKHKTLPAFSVQYHPEANPGPSDSNYLFDDFVAMMTNFKEKERHINA</sequence>
<evidence type="ECO:0000255" key="1">
    <source>
        <dbReference type="HAMAP-Rule" id="MF_01209"/>
    </source>
</evidence>
<accession>Q6GA11</accession>
<keyword id="KW-0028">Amino-acid biosynthesis</keyword>
<keyword id="KW-0055">Arginine biosynthesis</keyword>
<keyword id="KW-0067">ATP-binding</keyword>
<keyword id="KW-0315">Glutamine amidotransferase</keyword>
<keyword id="KW-0436">Ligase</keyword>
<keyword id="KW-0547">Nucleotide-binding</keyword>
<keyword id="KW-0665">Pyrimidine biosynthesis</keyword>
<reference key="1">
    <citation type="journal article" date="2004" name="Proc. Natl. Acad. Sci. U.S.A.">
        <title>Complete genomes of two clinical Staphylococcus aureus strains: evidence for the rapid evolution of virulence and drug resistance.</title>
        <authorList>
            <person name="Holden M.T.G."/>
            <person name="Feil E.J."/>
            <person name="Lindsay J.A."/>
            <person name="Peacock S.J."/>
            <person name="Day N.P.J."/>
            <person name="Enright M.C."/>
            <person name="Foster T.J."/>
            <person name="Moore C.E."/>
            <person name="Hurst L."/>
            <person name="Atkin R."/>
            <person name="Barron A."/>
            <person name="Bason N."/>
            <person name="Bentley S.D."/>
            <person name="Chillingworth C."/>
            <person name="Chillingworth T."/>
            <person name="Churcher C."/>
            <person name="Clark L."/>
            <person name="Corton C."/>
            <person name="Cronin A."/>
            <person name="Doggett J."/>
            <person name="Dowd L."/>
            <person name="Feltwell T."/>
            <person name="Hance Z."/>
            <person name="Harris B."/>
            <person name="Hauser H."/>
            <person name="Holroyd S."/>
            <person name="Jagels K."/>
            <person name="James K.D."/>
            <person name="Lennard N."/>
            <person name="Line A."/>
            <person name="Mayes R."/>
            <person name="Moule S."/>
            <person name="Mungall K."/>
            <person name="Ormond D."/>
            <person name="Quail M.A."/>
            <person name="Rabbinowitsch E."/>
            <person name="Rutherford K.M."/>
            <person name="Sanders M."/>
            <person name="Sharp S."/>
            <person name="Simmonds M."/>
            <person name="Stevens K."/>
            <person name="Whitehead S."/>
            <person name="Barrell B.G."/>
            <person name="Spratt B.G."/>
            <person name="Parkhill J."/>
        </authorList>
    </citation>
    <scope>NUCLEOTIDE SEQUENCE [LARGE SCALE GENOMIC DNA]</scope>
    <source>
        <strain>MSSA476</strain>
    </source>
</reference>